<gene>
    <name evidence="8" type="primary">Elk1</name>
</gene>
<sequence>MDPSVTLWQFLLQLLREQGNGHIISWTSRDGGEFKLVDAEEVARLWGLRKNKTNMNYDKLSRALRYYYDKNIIRKVSGQKFVYKFVSYPEVAGCSTEDCPPQPEVSVTSAVAMAPATVHSGPGDNATGKPGTPKGAGMTGQGGLARSSRNEYMRSGLYSTFTIQSLQPQPPLHPRPASVLPNTTPAGVPAPPSGSRSTSPNPLEACLEAEEAGLPLQVILTPPEAPNQKSEELSLNPGFGRPQPPEVKVEGPKEELEVTEVGGFSPEAVKAEQEVSPSEGLLARLPAILTENTAQVCGLSTSTTEITQPQKGRKPRDLELPLSPSLLGGQGPERTPGSGTSSGLQAQGPALTPSLLPTHTLTPVLLTPSSLPPSIHFWSTLSPIAPRSPAKLSFQFPSSGSAQVHIPSISVDGLSTPVVLSPGPQKP</sequence>
<feature type="chain" id="PRO_0000433929" description="ETS domain-containing protein Elk-1">
    <location>
        <begin position="1"/>
        <end position="427"/>
    </location>
</feature>
<feature type="DNA-binding region" description="ETS" evidence="2">
    <location>
        <begin position="5"/>
        <end position="86"/>
    </location>
</feature>
<feature type="region of interest" description="Disordered" evidence="4">
    <location>
        <begin position="116"/>
        <end position="146"/>
    </location>
</feature>
<feature type="region of interest" description="Disordered" evidence="4">
    <location>
        <begin position="166"/>
        <end position="202"/>
    </location>
</feature>
<feature type="region of interest" description="Disordered" evidence="4">
    <location>
        <begin position="226"/>
        <end position="252"/>
    </location>
</feature>
<feature type="region of interest" description="Disordered" evidence="4">
    <location>
        <begin position="300"/>
        <end position="350"/>
    </location>
</feature>
<feature type="region of interest" description="Sufficient for interaction with MAD2L2" evidence="1">
    <location>
        <begin position="348"/>
        <end position="398"/>
    </location>
</feature>
<feature type="compositionally biased region" description="Polar residues" evidence="4">
    <location>
        <begin position="300"/>
        <end position="310"/>
    </location>
</feature>
<feature type="modified residue" description="Phosphoserine; by MAPK1" evidence="1">
    <location>
        <position position="323"/>
    </location>
</feature>
<feature type="modified residue" description="Phosphothreonine; by MAPK1" evidence="1">
    <location>
        <position position="335"/>
    </location>
</feature>
<feature type="modified residue" description="Phosphothreonine; by MAPK1" evidence="1">
    <location>
        <position position="352"/>
    </location>
</feature>
<feature type="modified residue" description="Phosphothreonine; by MAPK1" evidence="1">
    <location>
        <position position="362"/>
    </location>
</feature>
<feature type="modified residue" description="Phosphothreonine; by MAPK1" evidence="1">
    <location>
        <position position="367"/>
    </location>
</feature>
<feature type="modified residue" description="Phosphoserine; by MAPK1 and MAPK8" evidence="1">
    <location>
        <position position="382"/>
    </location>
</feature>
<feature type="modified residue" description="Phosphoserine; by MAPK1" evidence="1">
    <location>
        <position position="388"/>
    </location>
</feature>
<feature type="modified residue" description="Phosphothreonine; by MAPK1" evidence="1">
    <location>
        <position position="416"/>
    </location>
</feature>
<feature type="modified residue" description="Phosphoserine; by MAPK1" evidence="1">
    <location>
        <position position="421"/>
    </location>
</feature>
<feature type="glycosylation site" description="O-linked (GlcNAc) threonine" evidence="1">
    <location>
        <position position="380"/>
    </location>
</feature>
<feature type="cross-link" description="Glycyl lysine isopeptide (Lys-Gly) (interchain with G-Cter in SUMO)" evidence="1">
    <location>
        <position position="229"/>
    </location>
</feature>
<feature type="cross-link" description="Glycyl lysine isopeptide (Lys-Gly) (interchain with G-Cter in SUMO)" evidence="1">
    <location>
        <position position="248"/>
    </location>
</feature>
<feature type="cross-link" description="Glycyl lysine isopeptide (Lys-Gly) (interchain with G-Cter in SUMO)" evidence="1">
    <location>
        <position position="253"/>
    </location>
</feature>
<name>ELK1_RAT</name>
<keyword id="KW-0238">DNA-binding</keyword>
<keyword id="KW-0325">Glycoprotein</keyword>
<keyword id="KW-1017">Isopeptide bond</keyword>
<keyword id="KW-0539">Nucleus</keyword>
<keyword id="KW-0597">Phosphoprotein</keyword>
<keyword id="KW-1185">Reference proteome</keyword>
<keyword id="KW-0804">Transcription</keyword>
<keyword id="KW-0805">Transcription regulation</keyword>
<keyword id="KW-0832">Ubl conjugation</keyword>
<proteinExistence type="evidence at protein level"/>
<comment type="function">
    <text evidence="1 5">Transcription factor that binds to purine-rich DNA sequences. Forms a ternary complex with SRF and the ETS and SRF motifs of the serum response element (SRE) on the promoter region of immediate early genes such as FOS and IER2 (By similarity) (PubMed:17156131). Induces target gene transcription upon JNK and MAPK-signaling pathways stimulation (PubMed:17156131).</text>
</comment>
<comment type="subunit">
    <text evidence="1">Interacts in its sumoylated form with PIAS2/PIASX which enhances its transcriptional activator activity. Interacts with MAD2L2; the interaction is direct and promotes phosphorylation by the kinases MAPK8 and/or MAPK9. Interacts with POU1F1.</text>
</comment>
<comment type="subcellular location">
    <subcellularLocation>
        <location evidence="1">Nucleus</location>
    </subcellularLocation>
</comment>
<comment type="PTM">
    <text evidence="1">Sumoylation represses transcriptional activator activity as it results in recruitment of HDAC2 to target gene promoters which leads to decreased histone acetylation and reduced transactivator activity. It also regulates nuclear retention.</text>
</comment>
<comment type="PTM">
    <text evidence="1 5">On mitogenic stimulation, phosphorylated on C-terminal serine and threonine residues by MAPK1. Ser-382 and Ser-388 are the preferred sites for MAPK1. In vitro, phosphorylation by MAPK1 potentiates ternary complex formation with the serum responses factors, SRE and SRF. Also phosphorylated on Ser-382 by MAPK8 and/or MAKP9. Phosphorylation leads to loss of sumoylation and restores transcriptional activator activity. Phosphorylated and activated by CAMK4, MAPK11, MAPK12 and MAPK14 (By similarity). Upon bFGF stimulus, phosphorylated by PAK1 (PubMed:17156131). Phosphorylated by PRP4K at Thr-416; phosphorylation activation ELK1 transcriptional activity (By similarity).</text>
</comment>
<comment type="similarity">
    <text evidence="3">Belongs to the ETS family.</text>
</comment>
<protein>
    <recommendedName>
        <fullName evidence="6">ETS domain-containing protein Elk-1</fullName>
    </recommendedName>
</protein>
<accession>A4GTP4</accession>
<dbReference type="EMBL" id="EF429098">
    <property type="protein sequence ID" value="ABO27185.1"/>
    <property type="molecule type" value="mRNA"/>
</dbReference>
<dbReference type="EMBL" id="AABR07036739">
    <property type="status" value="NOT_ANNOTATED_CDS"/>
    <property type="molecule type" value="Genomic_DNA"/>
</dbReference>
<dbReference type="EMBL" id="CH474009">
    <property type="protein sequence ID" value="EDL97728.1"/>
    <property type="molecule type" value="Genomic_DNA"/>
</dbReference>
<dbReference type="RefSeq" id="NP_001101529.1">
    <property type="nucleotide sequence ID" value="NM_001108059.3"/>
</dbReference>
<dbReference type="RefSeq" id="XP_006256676.1">
    <property type="nucleotide sequence ID" value="XM_006256614.3"/>
</dbReference>
<dbReference type="SMR" id="A4GTP4"/>
<dbReference type="CORUM" id="A4GTP4"/>
<dbReference type="FunCoup" id="A4GTP4">
    <property type="interactions" value="1547"/>
</dbReference>
<dbReference type="STRING" id="10116.ENSRNOP00000013522"/>
<dbReference type="GlyGen" id="A4GTP4">
    <property type="glycosylation" value="1 site"/>
</dbReference>
<dbReference type="iPTMnet" id="A4GTP4"/>
<dbReference type="PhosphoSitePlus" id="A4GTP4"/>
<dbReference type="PaxDb" id="10116-ENSRNOP00000013522"/>
<dbReference type="Ensembl" id="ENSRNOT00000013522.6">
    <property type="protein sequence ID" value="ENSRNOP00000013522.3"/>
    <property type="gene ID" value="ENSRNOG00000010171.6"/>
</dbReference>
<dbReference type="GeneID" id="314436"/>
<dbReference type="KEGG" id="rno:314436"/>
<dbReference type="UCSC" id="RGD:1598663">
    <property type="organism name" value="rat"/>
</dbReference>
<dbReference type="AGR" id="RGD:1598663"/>
<dbReference type="CTD" id="2002"/>
<dbReference type="RGD" id="1598663">
    <property type="gene designation" value="Elk1"/>
</dbReference>
<dbReference type="eggNOG" id="KOG3806">
    <property type="taxonomic scope" value="Eukaryota"/>
</dbReference>
<dbReference type="GeneTree" id="ENSGT00940000157571"/>
<dbReference type="HOGENOM" id="CLU_036905_0_0_1"/>
<dbReference type="InParanoid" id="A4GTP4"/>
<dbReference type="OMA" id="LPSRYPW"/>
<dbReference type="OrthoDB" id="10067219at2759"/>
<dbReference type="PhylomeDB" id="A4GTP4"/>
<dbReference type="TreeFam" id="TF317732"/>
<dbReference type="PRO" id="PR:A4GTP4"/>
<dbReference type="Proteomes" id="UP000002494">
    <property type="component" value="Chromosome X"/>
</dbReference>
<dbReference type="Proteomes" id="UP000234681">
    <property type="component" value="Chromosome x"/>
</dbReference>
<dbReference type="Bgee" id="ENSRNOG00000010171">
    <property type="expression patterns" value="Expressed in skeletal muscle tissue and 19 other cell types or tissues"/>
</dbReference>
<dbReference type="GO" id="GO:0043679">
    <property type="term" value="C:axon terminus"/>
    <property type="evidence" value="ECO:0000314"/>
    <property type="project" value="RGD"/>
</dbReference>
<dbReference type="GO" id="GO:0030425">
    <property type="term" value="C:dendrite"/>
    <property type="evidence" value="ECO:0000314"/>
    <property type="project" value="RGD"/>
</dbReference>
<dbReference type="GO" id="GO:0031966">
    <property type="term" value="C:mitochondrial membrane"/>
    <property type="evidence" value="ECO:0000314"/>
    <property type="project" value="RGD"/>
</dbReference>
<dbReference type="GO" id="GO:0043025">
    <property type="term" value="C:neuronal cell body"/>
    <property type="evidence" value="ECO:0000314"/>
    <property type="project" value="RGD"/>
</dbReference>
<dbReference type="GO" id="GO:0005654">
    <property type="term" value="C:nucleoplasm"/>
    <property type="evidence" value="ECO:0007669"/>
    <property type="project" value="Ensembl"/>
</dbReference>
<dbReference type="GO" id="GO:0005634">
    <property type="term" value="C:nucleus"/>
    <property type="evidence" value="ECO:0000266"/>
    <property type="project" value="RGD"/>
</dbReference>
<dbReference type="GO" id="GO:0003682">
    <property type="term" value="F:chromatin binding"/>
    <property type="evidence" value="ECO:0000314"/>
    <property type="project" value="RGD"/>
</dbReference>
<dbReference type="GO" id="GO:0001228">
    <property type="term" value="F:DNA-binding transcription activator activity, RNA polymerase II-specific"/>
    <property type="evidence" value="ECO:0000266"/>
    <property type="project" value="RGD"/>
</dbReference>
<dbReference type="GO" id="GO:0003700">
    <property type="term" value="F:DNA-binding transcription factor activity"/>
    <property type="evidence" value="ECO:0000266"/>
    <property type="project" value="RGD"/>
</dbReference>
<dbReference type="GO" id="GO:0000981">
    <property type="term" value="F:DNA-binding transcription factor activity, RNA polymerase II-specific"/>
    <property type="evidence" value="ECO:0000250"/>
    <property type="project" value="UniProtKB"/>
</dbReference>
<dbReference type="GO" id="GO:0003690">
    <property type="term" value="F:double-stranded DNA binding"/>
    <property type="evidence" value="ECO:0000314"/>
    <property type="project" value="RGD"/>
</dbReference>
<dbReference type="GO" id="GO:0036033">
    <property type="term" value="F:mediator complex binding"/>
    <property type="evidence" value="ECO:0000266"/>
    <property type="project" value="RGD"/>
</dbReference>
<dbReference type="GO" id="GO:0000978">
    <property type="term" value="F:RNA polymerase II cis-regulatory region sequence-specific DNA binding"/>
    <property type="evidence" value="ECO:0000314"/>
    <property type="project" value="RGD"/>
</dbReference>
<dbReference type="GO" id="GO:0061629">
    <property type="term" value="F:RNA polymerase II-specific DNA-binding transcription factor binding"/>
    <property type="evidence" value="ECO:0000266"/>
    <property type="project" value="RGD"/>
</dbReference>
<dbReference type="GO" id="GO:1990837">
    <property type="term" value="F:sequence-specific double-stranded DNA binding"/>
    <property type="evidence" value="ECO:0000266"/>
    <property type="project" value="RGD"/>
</dbReference>
<dbReference type="GO" id="GO:0000976">
    <property type="term" value="F:transcription cis-regulatory region binding"/>
    <property type="evidence" value="ECO:0000266"/>
    <property type="project" value="RGD"/>
</dbReference>
<dbReference type="GO" id="GO:0140537">
    <property type="term" value="F:transcription regulator activator activity"/>
    <property type="evidence" value="ECO:0000266"/>
    <property type="project" value="RGD"/>
</dbReference>
<dbReference type="GO" id="GO:0140416">
    <property type="term" value="F:transcription regulator inhibitor activity"/>
    <property type="evidence" value="ECO:0000266"/>
    <property type="project" value="RGD"/>
</dbReference>
<dbReference type="GO" id="GO:0030154">
    <property type="term" value="P:cell differentiation"/>
    <property type="evidence" value="ECO:0000318"/>
    <property type="project" value="GO_Central"/>
</dbReference>
<dbReference type="GO" id="GO:0071480">
    <property type="term" value="P:cellular response to gamma radiation"/>
    <property type="evidence" value="ECO:0000314"/>
    <property type="project" value="RGD"/>
</dbReference>
<dbReference type="GO" id="GO:0071396">
    <property type="term" value="P:cellular response to lipid"/>
    <property type="evidence" value="ECO:0000314"/>
    <property type="project" value="RGD"/>
</dbReference>
<dbReference type="GO" id="GO:0071394">
    <property type="term" value="P:cellular response to testosterone stimulus"/>
    <property type="evidence" value="ECO:0000270"/>
    <property type="project" value="RGD"/>
</dbReference>
<dbReference type="GO" id="GO:0010467">
    <property type="term" value="P:gene expression"/>
    <property type="evidence" value="ECO:0000266"/>
    <property type="project" value="RGD"/>
</dbReference>
<dbReference type="GO" id="GO:0110088">
    <property type="term" value="P:hippocampal neuron apoptotic process"/>
    <property type="evidence" value="ECO:0000315"/>
    <property type="project" value="RGD"/>
</dbReference>
<dbReference type="GO" id="GO:0001889">
    <property type="term" value="P:liver development"/>
    <property type="evidence" value="ECO:0000266"/>
    <property type="project" value="RGD"/>
</dbReference>
<dbReference type="GO" id="GO:0030324">
    <property type="term" value="P:lung development"/>
    <property type="evidence" value="ECO:0000266"/>
    <property type="project" value="RGD"/>
</dbReference>
<dbReference type="GO" id="GO:0045893">
    <property type="term" value="P:positive regulation of DNA-templated transcription"/>
    <property type="evidence" value="ECO:0000266"/>
    <property type="project" value="RGD"/>
</dbReference>
<dbReference type="GO" id="GO:0045944">
    <property type="term" value="P:positive regulation of transcription by RNA polymerase II"/>
    <property type="evidence" value="ECO:0000314"/>
    <property type="project" value="MGI"/>
</dbReference>
<dbReference type="GO" id="GO:0006355">
    <property type="term" value="P:regulation of DNA-templated transcription"/>
    <property type="evidence" value="ECO:0000266"/>
    <property type="project" value="RGD"/>
</dbReference>
<dbReference type="GO" id="GO:0006357">
    <property type="term" value="P:regulation of transcription by RNA polymerase II"/>
    <property type="evidence" value="ECO:0000318"/>
    <property type="project" value="GO_Central"/>
</dbReference>
<dbReference type="GO" id="GO:0045471">
    <property type="term" value="P:response to ethanol"/>
    <property type="evidence" value="ECO:0000270"/>
    <property type="project" value="RGD"/>
</dbReference>
<dbReference type="GO" id="GO:0071774">
    <property type="term" value="P:response to fibroblast growth factor"/>
    <property type="evidence" value="ECO:0000314"/>
    <property type="project" value="UniProtKB"/>
</dbReference>
<dbReference type="GO" id="GO:0009416">
    <property type="term" value="P:response to light stimulus"/>
    <property type="evidence" value="ECO:0000314"/>
    <property type="project" value="RGD"/>
</dbReference>
<dbReference type="FunFam" id="1.10.10.10:FF:000365">
    <property type="entry name" value="ETS domain-containing protein Elk-1 isoform a"/>
    <property type="match status" value="1"/>
</dbReference>
<dbReference type="Gene3D" id="1.10.10.10">
    <property type="entry name" value="Winged helix-like DNA-binding domain superfamily/Winged helix DNA-binding domain"/>
    <property type="match status" value="1"/>
</dbReference>
<dbReference type="InterPro" id="IPR000418">
    <property type="entry name" value="Ets_dom"/>
</dbReference>
<dbReference type="InterPro" id="IPR046328">
    <property type="entry name" value="ETS_fam"/>
</dbReference>
<dbReference type="InterPro" id="IPR036388">
    <property type="entry name" value="WH-like_DNA-bd_sf"/>
</dbReference>
<dbReference type="InterPro" id="IPR036390">
    <property type="entry name" value="WH_DNA-bd_sf"/>
</dbReference>
<dbReference type="PANTHER" id="PTHR11849">
    <property type="entry name" value="ETS"/>
    <property type="match status" value="1"/>
</dbReference>
<dbReference type="PANTHER" id="PTHR11849:SF178">
    <property type="entry name" value="ETS DOMAIN-CONTAINING PROTEIN ELK-1"/>
    <property type="match status" value="1"/>
</dbReference>
<dbReference type="Pfam" id="PF00178">
    <property type="entry name" value="Ets"/>
    <property type="match status" value="1"/>
</dbReference>
<dbReference type="PRINTS" id="PR00454">
    <property type="entry name" value="ETSDOMAIN"/>
</dbReference>
<dbReference type="SMART" id="SM00413">
    <property type="entry name" value="ETS"/>
    <property type="match status" value="1"/>
</dbReference>
<dbReference type="SUPFAM" id="SSF46785">
    <property type="entry name" value="Winged helix' DNA-binding domain"/>
    <property type="match status" value="1"/>
</dbReference>
<dbReference type="PROSITE" id="PS00345">
    <property type="entry name" value="ETS_DOMAIN_1"/>
    <property type="match status" value="1"/>
</dbReference>
<dbReference type="PROSITE" id="PS00346">
    <property type="entry name" value="ETS_DOMAIN_2"/>
    <property type="match status" value="1"/>
</dbReference>
<dbReference type="PROSITE" id="PS50061">
    <property type="entry name" value="ETS_DOMAIN_3"/>
    <property type="match status" value="1"/>
</dbReference>
<evidence type="ECO:0000250" key="1">
    <source>
        <dbReference type="UniProtKB" id="P19419"/>
    </source>
</evidence>
<evidence type="ECO:0000255" key="2">
    <source>
        <dbReference type="PROSITE-ProRule" id="PRU00237"/>
    </source>
</evidence>
<evidence type="ECO:0000255" key="3">
    <source>
        <dbReference type="RuleBase" id="RU004019"/>
    </source>
</evidence>
<evidence type="ECO:0000256" key="4">
    <source>
        <dbReference type="SAM" id="MobiDB-lite"/>
    </source>
</evidence>
<evidence type="ECO:0000269" key="5">
    <source>
    </source>
</evidence>
<evidence type="ECO:0000305" key="6"/>
<evidence type="ECO:0000312" key="7">
    <source>
        <dbReference type="EMBL" id="ABO27185.1"/>
    </source>
</evidence>
<evidence type="ECO:0000312" key="8">
    <source>
        <dbReference type="RGD" id="1598663"/>
    </source>
</evidence>
<reference key="1">
    <citation type="submission" date="2007-02" db="EMBL/GenBank/DDBJ databases">
        <title>Serum- and glucocorticoid-inducible kinase 1 regulates zif268 expression through the mediation of SRF and CREB1.</title>
        <authorList>
            <person name="Tyan S.-W."/>
            <person name="Tsai M.-C."/>
            <person name="Lin C.-L."/>
            <person name="Ma Y.-L."/>
            <person name="Lee E.H.Y."/>
        </authorList>
    </citation>
    <scope>NUCLEOTIDE SEQUENCE [MRNA]</scope>
    <source>
        <strain evidence="7">Sprague-Dawley</strain>
        <tissue evidence="7">Hippocampus</tissue>
    </source>
</reference>
<reference key="2">
    <citation type="journal article" date="2004" name="Nature">
        <title>Genome sequence of the Brown Norway rat yields insights into mammalian evolution.</title>
        <authorList>
            <person name="Gibbs R.A."/>
            <person name="Weinstock G.M."/>
            <person name="Metzker M.L."/>
            <person name="Muzny D.M."/>
            <person name="Sodergren E.J."/>
            <person name="Scherer S."/>
            <person name="Scott G."/>
            <person name="Steffen D."/>
            <person name="Worley K.C."/>
            <person name="Burch P.E."/>
            <person name="Okwuonu G."/>
            <person name="Hines S."/>
            <person name="Lewis L."/>
            <person name="Deramo C."/>
            <person name="Delgado O."/>
            <person name="Dugan-Rocha S."/>
            <person name="Miner G."/>
            <person name="Morgan M."/>
            <person name="Hawes A."/>
            <person name="Gill R."/>
            <person name="Holt R.A."/>
            <person name="Adams M.D."/>
            <person name="Amanatides P.G."/>
            <person name="Baden-Tillson H."/>
            <person name="Barnstead M."/>
            <person name="Chin S."/>
            <person name="Evans C.A."/>
            <person name="Ferriera S."/>
            <person name="Fosler C."/>
            <person name="Glodek A."/>
            <person name="Gu Z."/>
            <person name="Jennings D."/>
            <person name="Kraft C.L."/>
            <person name="Nguyen T."/>
            <person name="Pfannkoch C.M."/>
            <person name="Sitter C."/>
            <person name="Sutton G.G."/>
            <person name="Venter J.C."/>
            <person name="Woodage T."/>
            <person name="Smith D."/>
            <person name="Lee H.-M."/>
            <person name="Gustafson E."/>
            <person name="Cahill P."/>
            <person name="Kana A."/>
            <person name="Doucette-Stamm L."/>
            <person name="Weinstock K."/>
            <person name="Fechtel K."/>
            <person name="Weiss R.B."/>
            <person name="Dunn D.M."/>
            <person name="Green E.D."/>
            <person name="Blakesley R.W."/>
            <person name="Bouffard G.G."/>
            <person name="De Jong P.J."/>
            <person name="Osoegawa K."/>
            <person name="Zhu B."/>
            <person name="Marra M."/>
            <person name="Schein J."/>
            <person name="Bosdet I."/>
            <person name="Fjell C."/>
            <person name="Jones S."/>
            <person name="Krzywinski M."/>
            <person name="Mathewson C."/>
            <person name="Siddiqui A."/>
            <person name="Wye N."/>
            <person name="McPherson J."/>
            <person name="Zhao S."/>
            <person name="Fraser C.M."/>
            <person name="Shetty J."/>
            <person name="Shatsman S."/>
            <person name="Geer K."/>
            <person name="Chen Y."/>
            <person name="Abramzon S."/>
            <person name="Nierman W.C."/>
            <person name="Havlak P.H."/>
            <person name="Chen R."/>
            <person name="Durbin K.J."/>
            <person name="Egan A."/>
            <person name="Ren Y."/>
            <person name="Song X.-Z."/>
            <person name="Li B."/>
            <person name="Liu Y."/>
            <person name="Qin X."/>
            <person name="Cawley S."/>
            <person name="Cooney A.J."/>
            <person name="D'Souza L.M."/>
            <person name="Martin K."/>
            <person name="Wu J.Q."/>
            <person name="Gonzalez-Garay M.L."/>
            <person name="Jackson A.R."/>
            <person name="Kalafus K.J."/>
            <person name="McLeod M.P."/>
            <person name="Milosavljevic A."/>
            <person name="Virk D."/>
            <person name="Volkov A."/>
            <person name="Wheeler D.A."/>
            <person name="Zhang Z."/>
            <person name="Bailey J.A."/>
            <person name="Eichler E.E."/>
            <person name="Tuzun E."/>
            <person name="Birney E."/>
            <person name="Mongin E."/>
            <person name="Ureta-Vidal A."/>
            <person name="Woodwark C."/>
            <person name="Zdobnov E."/>
            <person name="Bork P."/>
            <person name="Suyama M."/>
            <person name="Torrents D."/>
            <person name="Alexandersson M."/>
            <person name="Trask B.J."/>
            <person name="Young J.M."/>
            <person name="Huang H."/>
            <person name="Wang H."/>
            <person name="Xing H."/>
            <person name="Daniels S."/>
            <person name="Gietzen D."/>
            <person name="Schmidt J."/>
            <person name="Stevens K."/>
            <person name="Vitt U."/>
            <person name="Wingrove J."/>
            <person name="Camara F."/>
            <person name="Mar Alba M."/>
            <person name="Abril J.F."/>
            <person name="Guigo R."/>
            <person name="Smit A."/>
            <person name="Dubchak I."/>
            <person name="Rubin E.M."/>
            <person name="Couronne O."/>
            <person name="Poliakov A."/>
            <person name="Huebner N."/>
            <person name="Ganten D."/>
            <person name="Goesele C."/>
            <person name="Hummel O."/>
            <person name="Kreitler T."/>
            <person name="Lee Y.-A."/>
            <person name="Monti J."/>
            <person name="Schulz H."/>
            <person name="Zimdahl H."/>
            <person name="Himmelbauer H."/>
            <person name="Lehrach H."/>
            <person name="Jacob H.J."/>
            <person name="Bromberg S."/>
            <person name="Gullings-Handley J."/>
            <person name="Jensen-Seaman M.I."/>
            <person name="Kwitek A.E."/>
            <person name="Lazar J."/>
            <person name="Pasko D."/>
            <person name="Tonellato P.J."/>
            <person name="Twigger S."/>
            <person name="Ponting C.P."/>
            <person name="Duarte J.M."/>
            <person name="Rice S."/>
            <person name="Goodstadt L."/>
            <person name="Beatson S.A."/>
            <person name="Emes R.D."/>
            <person name="Winter E.E."/>
            <person name="Webber C."/>
            <person name="Brandt P."/>
            <person name="Nyakatura G."/>
            <person name="Adetobi M."/>
            <person name="Chiaromonte F."/>
            <person name="Elnitski L."/>
            <person name="Eswara P."/>
            <person name="Hardison R.C."/>
            <person name="Hou M."/>
            <person name="Kolbe D."/>
            <person name="Makova K."/>
            <person name="Miller W."/>
            <person name="Nekrutenko A."/>
            <person name="Riemer C."/>
            <person name="Schwartz S."/>
            <person name="Taylor J."/>
            <person name="Yang S."/>
            <person name="Zhang Y."/>
            <person name="Lindpaintner K."/>
            <person name="Andrews T.D."/>
            <person name="Caccamo M."/>
            <person name="Clamp M."/>
            <person name="Clarke L."/>
            <person name="Curwen V."/>
            <person name="Durbin R.M."/>
            <person name="Eyras E."/>
            <person name="Searle S.M."/>
            <person name="Cooper G.M."/>
            <person name="Batzoglou S."/>
            <person name="Brudno M."/>
            <person name="Sidow A."/>
            <person name="Stone E.A."/>
            <person name="Payseur B.A."/>
            <person name="Bourque G."/>
            <person name="Lopez-Otin C."/>
            <person name="Puente X.S."/>
            <person name="Chakrabarti K."/>
            <person name="Chatterji S."/>
            <person name="Dewey C."/>
            <person name="Pachter L."/>
            <person name="Bray N."/>
            <person name="Yap V.B."/>
            <person name="Caspi A."/>
            <person name="Tesler G."/>
            <person name="Pevzner P.A."/>
            <person name="Haussler D."/>
            <person name="Roskin K.M."/>
            <person name="Baertsch R."/>
            <person name="Clawson H."/>
            <person name="Furey T.S."/>
            <person name="Hinrichs A.S."/>
            <person name="Karolchik D."/>
            <person name="Kent W.J."/>
            <person name="Rosenbloom K.R."/>
            <person name="Trumbower H."/>
            <person name="Weirauch M."/>
            <person name="Cooper D.N."/>
            <person name="Stenson P.D."/>
            <person name="Ma B."/>
            <person name="Brent M."/>
            <person name="Arumugam M."/>
            <person name="Shteynberg D."/>
            <person name="Copley R.R."/>
            <person name="Taylor M.S."/>
            <person name="Riethman H."/>
            <person name="Mudunuri U."/>
            <person name="Peterson J."/>
            <person name="Guyer M."/>
            <person name="Felsenfeld A."/>
            <person name="Old S."/>
            <person name="Mockrin S."/>
            <person name="Collins F.S."/>
        </authorList>
    </citation>
    <scope>NUCLEOTIDE SEQUENCE [LARGE SCALE GENOMIC DNA]</scope>
    <source>
        <strain>Brown Norway</strain>
    </source>
</reference>
<reference key="3">
    <citation type="submission" date="2005-09" db="EMBL/GenBank/DDBJ databases">
        <authorList>
            <person name="Mural R.J."/>
            <person name="Adams M.D."/>
            <person name="Myers E.W."/>
            <person name="Smith H.O."/>
            <person name="Venter J.C."/>
        </authorList>
    </citation>
    <scope>NUCLEOTIDE SEQUENCE [LARGE SCALE GENOMIC DNA]</scope>
</reference>
<reference key="4">
    <citation type="journal article" date="2007" name="J. Neurochem.">
        <title>JNK- and Rac1-dependent induction of immediate early gene pip92 suppresses neuronal differentiation.</title>
        <authorList>
            <person name="Park J.B."/>
            <person name="Kim E.J."/>
            <person name="Yang E.J."/>
            <person name="Seo S.R."/>
            <person name="Chung K.C."/>
        </authorList>
    </citation>
    <scope>FUNCTION</scope>
    <scope>PHOSPHORYLATION</scope>
</reference>
<organism>
    <name type="scientific">Rattus norvegicus</name>
    <name type="common">Rat</name>
    <dbReference type="NCBI Taxonomy" id="10116"/>
    <lineage>
        <taxon>Eukaryota</taxon>
        <taxon>Metazoa</taxon>
        <taxon>Chordata</taxon>
        <taxon>Craniata</taxon>
        <taxon>Vertebrata</taxon>
        <taxon>Euteleostomi</taxon>
        <taxon>Mammalia</taxon>
        <taxon>Eutheria</taxon>
        <taxon>Euarchontoglires</taxon>
        <taxon>Glires</taxon>
        <taxon>Rodentia</taxon>
        <taxon>Myomorpha</taxon>
        <taxon>Muroidea</taxon>
        <taxon>Muridae</taxon>
        <taxon>Murinae</taxon>
        <taxon>Rattus</taxon>
    </lineage>
</organism>